<comment type="function">
    <text evidence="1">Peptide chain release factor 1 directs the termination of translation in response to the peptide chain termination codons UAG and UAA.</text>
</comment>
<comment type="subcellular location">
    <subcellularLocation>
        <location evidence="1">Cytoplasm</location>
    </subcellularLocation>
</comment>
<comment type="PTM">
    <text evidence="1">Methylated by PrmC. Methylation increases the termination efficiency of RF1.</text>
</comment>
<comment type="similarity">
    <text evidence="1">Belongs to the prokaryotic/mitochondrial release factor family.</text>
</comment>
<accession>Q5N0T6</accession>
<protein>
    <recommendedName>
        <fullName evidence="1">Peptide chain release factor 1</fullName>
        <shortName evidence="1">RF-1</shortName>
    </recommendedName>
</protein>
<sequence length="368" mass="41575">MAEPYLIEKLQSVEQTFQDLTRRLADPEIATDPREFQRVARMRSSMEELVTTYEEWKQRDAELKGAREILRESSGDPELREMAALEVNELEALLVSLEERLKILLLPRDPNDDKNIMLEIRAGTGGDEASLWAGDLLRMYSRYAESQGWRVKLLSESTGELGGYKEAILEIQGESVYSKLKFEAGVHRVQRVPATEAGGRVHTSTATVAIMPEVDEVEVSIDPKDIELTTARSGGAGGQNVNKVETAVDLFHKPTGIRIFCTEERSQLQNRERAMQILRAKLYEMKLQEQQEAVSSMRRSQVGTGSRSEKIRTYNYKDNRATDHRLGLNFSLNPVLEGEIEEVIQACISKDQTEQLAQMAQDQEAAKV</sequence>
<reference key="1">
    <citation type="journal article" date="2007" name="Photosyn. Res.">
        <title>Complete nucleotide sequence of the freshwater unicellular cyanobacterium Synechococcus elongatus PCC 6301 chromosome: gene content and organization.</title>
        <authorList>
            <person name="Sugita C."/>
            <person name="Ogata K."/>
            <person name="Shikata M."/>
            <person name="Jikuya H."/>
            <person name="Takano J."/>
            <person name="Furumichi M."/>
            <person name="Kanehisa M."/>
            <person name="Omata T."/>
            <person name="Sugiura M."/>
            <person name="Sugita M."/>
        </authorList>
    </citation>
    <scope>NUCLEOTIDE SEQUENCE [LARGE SCALE GENOMIC DNA]</scope>
    <source>
        <strain>ATCC 27144 / PCC 6301 / SAUG 1402/1</strain>
    </source>
</reference>
<dbReference type="EMBL" id="AP008231">
    <property type="protein sequence ID" value="BAD80084.1"/>
    <property type="molecule type" value="Genomic_DNA"/>
</dbReference>
<dbReference type="RefSeq" id="WP_011244204.1">
    <property type="nucleotide sequence ID" value="NZ_CP085785.1"/>
</dbReference>
<dbReference type="SMR" id="Q5N0T6"/>
<dbReference type="GeneID" id="72431086"/>
<dbReference type="KEGG" id="syc:syc1894_d"/>
<dbReference type="eggNOG" id="COG0216">
    <property type="taxonomic scope" value="Bacteria"/>
</dbReference>
<dbReference type="Proteomes" id="UP000001175">
    <property type="component" value="Chromosome"/>
</dbReference>
<dbReference type="GO" id="GO:0005737">
    <property type="term" value="C:cytoplasm"/>
    <property type="evidence" value="ECO:0007669"/>
    <property type="project" value="UniProtKB-SubCell"/>
</dbReference>
<dbReference type="GO" id="GO:0016149">
    <property type="term" value="F:translation release factor activity, codon specific"/>
    <property type="evidence" value="ECO:0007669"/>
    <property type="project" value="UniProtKB-UniRule"/>
</dbReference>
<dbReference type="FunFam" id="3.30.160.20:FF:000004">
    <property type="entry name" value="Peptide chain release factor 1"/>
    <property type="match status" value="1"/>
</dbReference>
<dbReference type="FunFam" id="3.30.70.1660:FF:000002">
    <property type="entry name" value="Peptide chain release factor 1"/>
    <property type="match status" value="1"/>
</dbReference>
<dbReference type="FunFam" id="3.30.70.1660:FF:000014">
    <property type="entry name" value="Peptide chain release factor 1"/>
    <property type="match status" value="1"/>
</dbReference>
<dbReference type="Gene3D" id="3.30.160.20">
    <property type="match status" value="1"/>
</dbReference>
<dbReference type="Gene3D" id="3.30.70.1660">
    <property type="match status" value="1"/>
</dbReference>
<dbReference type="Gene3D" id="6.10.140.1950">
    <property type="match status" value="1"/>
</dbReference>
<dbReference type="HAMAP" id="MF_00093">
    <property type="entry name" value="Rel_fac_1"/>
    <property type="match status" value="1"/>
</dbReference>
<dbReference type="InterPro" id="IPR005139">
    <property type="entry name" value="PCRF"/>
</dbReference>
<dbReference type="InterPro" id="IPR000352">
    <property type="entry name" value="Pep_chain_release_fac_I"/>
</dbReference>
<dbReference type="InterPro" id="IPR045853">
    <property type="entry name" value="Pep_chain_release_fac_I_sf"/>
</dbReference>
<dbReference type="InterPro" id="IPR050057">
    <property type="entry name" value="Prokaryotic/Mito_RF"/>
</dbReference>
<dbReference type="InterPro" id="IPR004373">
    <property type="entry name" value="RF-1"/>
</dbReference>
<dbReference type="NCBIfam" id="TIGR00019">
    <property type="entry name" value="prfA"/>
    <property type="match status" value="1"/>
</dbReference>
<dbReference type="NCBIfam" id="NF001859">
    <property type="entry name" value="PRK00591.1"/>
    <property type="match status" value="1"/>
</dbReference>
<dbReference type="PANTHER" id="PTHR43804">
    <property type="entry name" value="LD18447P"/>
    <property type="match status" value="1"/>
</dbReference>
<dbReference type="PANTHER" id="PTHR43804:SF8">
    <property type="entry name" value="PEPTIDE CHAIN RELEASE FACTOR APG3, CHLOROPLASTIC"/>
    <property type="match status" value="1"/>
</dbReference>
<dbReference type="Pfam" id="PF03462">
    <property type="entry name" value="PCRF"/>
    <property type="match status" value="1"/>
</dbReference>
<dbReference type="Pfam" id="PF00472">
    <property type="entry name" value="RF-1"/>
    <property type="match status" value="1"/>
</dbReference>
<dbReference type="SMART" id="SM00937">
    <property type="entry name" value="PCRF"/>
    <property type="match status" value="1"/>
</dbReference>
<dbReference type="SUPFAM" id="SSF75620">
    <property type="entry name" value="Release factor"/>
    <property type="match status" value="1"/>
</dbReference>
<dbReference type="PROSITE" id="PS00745">
    <property type="entry name" value="RF_PROK_I"/>
    <property type="match status" value="1"/>
</dbReference>
<evidence type="ECO:0000255" key="1">
    <source>
        <dbReference type="HAMAP-Rule" id="MF_00093"/>
    </source>
</evidence>
<name>RF1_SYNP6</name>
<gene>
    <name evidence="1" type="primary">prfA</name>
    <name type="ordered locus">syc1894_d</name>
</gene>
<organism>
    <name type="scientific">Synechococcus sp. (strain ATCC 27144 / PCC 6301 / SAUG 1402/1)</name>
    <name type="common">Anacystis nidulans</name>
    <dbReference type="NCBI Taxonomy" id="269084"/>
    <lineage>
        <taxon>Bacteria</taxon>
        <taxon>Bacillati</taxon>
        <taxon>Cyanobacteriota</taxon>
        <taxon>Cyanophyceae</taxon>
        <taxon>Synechococcales</taxon>
        <taxon>Synechococcaceae</taxon>
        <taxon>Synechococcus</taxon>
    </lineage>
</organism>
<feature type="chain" id="PRO_0000263372" description="Peptide chain release factor 1">
    <location>
        <begin position="1"/>
        <end position="368"/>
    </location>
</feature>
<feature type="modified residue" description="N5-methylglutamine" evidence="1">
    <location>
        <position position="239"/>
    </location>
</feature>
<proteinExistence type="inferred from homology"/>
<keyword id="KW-0963">Cytoplasm</keyword>
<keyword id="KW-0488">Methylation</keyword>
<keyword id="KW-0648">Protein biosynthesis</keyword>